<gene>
    <name evidence="6" type="primary">bphA2</name>
    <name evidence="8" type="synonym">bphAb</name>
    <name evidence="8" type="ordered locus">RHA1_ro08059</name>
</gene>
<feature type="chain" id="PRO_0000430660" description="Biphenyl 2,3-dioxygenase subunit beta">
    <location>
        <begin position="1"/>
        <end position="187"/>
    </location>
</feature>
<feature type="helix" evidence="9">
    <location>
        <begin position="20"/>
        <end position="38"/>
    </location>
</feature>
<feature type="helix" evidence="9">
    <location>
        <begin position="42"/>
        <end position="47"/>
    </location>
</feature>
<feature type="strand" evidence="9">
    <location>
        <begin position="49"/>
        <end position="58"/>
    </location>
</feature>
<feature type="helix" evidence="9">
    <location>
        <begin position="65"/>
        <end position="70"/>
    </location>
</feature>
<feature type="strand" evidence="9">
    <location>
        <begin position="79"/>
        <end position="83"/>
    </location>
</feature>
<feature type="helix" evidence="9">
    <location>
        <begin position="85"/>
        <end position="95"/>
    </location>
</feature>
<feature type="helix" evidence="9">
    <location>
        <begin position="101"/>
        <end position="103"/>
    </location>
</feature>
<feature type="strand" evidence="9">
    <location>
        <begin position="108"/>
        <end position="120"/>
    </location>
</feature>
<feature type="strand" evidence="9">
    <location>
        <begin position="126"/>
        <end position="139"/>
    </location>
</feature>
<feature type="turn" evidence="9">
    <location>
        <begin position="140"/>
        <end position="142"/>
    </location>
</feature>
<feature type="strand" evidence="9">
    <location>
        <begin position="143"/>
        <end position="157"/>
    </location>
</feature>
<feature type="strand" evidence="10">
    <location>
        <begin position="159"/>
        <end position="162"/>
    </location>
</feature>
<feature type="strand" evidence="9">
    <location>
        <begin position="164"/>
        <end position="174"/>
    </location>
</feature>
<feature type="strand" evidence="9">
    <location>
        <begin position="176"/>
        <end position="181"/>
    </location>
</feature>
<proteinExistence type="evidence at protein level"/>
<comment type="function">
    <text evidence="3 6">Part of the oxygenase component of the biphenyl dioxygenase system that catalyzes the stereospecific dihydroxylation of the aromatic ring of biphenyl, yielding a dihydrodiol compound. Is likely involved in biphenyl degradation that allows growth of Rhodococcus sp. strain RHA1 on biphenyl as the sole source of carbon and energy. Can also use naphtalene and 4-chlorobiphenyl (4-CB) as substrates, as well as some polychlorinated biphenyls (PCB) such as 2,2'-dichlorobiphenyl, 2,3-dichlorobiphenyl and 2,5,2'-trichlorobiphenyl. Exhibits weak activity toward dibenzofuran and dibenzo-p-dioxin. Electrons are transferred from NADH to the [2Fe-2S] cluster in BphA1 via FAD of BphA4 and [2Fe-2S] cluster of BphA3.</text>
</comment>
<comment type="catalytic activity">
    <reaction evidence="3">
        <text>biphenyl + NADH + O2 + H(+) = (2R,3S)-3-phenylcyclohexa-3,5-diene-1,2-diol + NAD(+)</text>
        <dbReference type="Rhea" id="RHEA:18165"/>
        <dbReference type="ChEBI" id="CHEBI:15378"/>
        <dbReference type="ChEBI" id="CHEBI:15379"/>
        <dbReference type="ChEBI" id="CHEBI:17097"/>
        <dbReference type="ChEBI" id="CHEBI:32922"/>
        <dbReference type="ChEBI" id="CHEBI:57540"/>
        <dbReference type="ChEBI" id="CHEBI:57945"/>
        <dbReference type="EC" id="1.14.12.18"/>
    </reaction>
</comment>
<comment type="pathway">
    <text evidence="6">Xenobiotic degradation; biphenyl degradation; 2-hydroxy-2,4-pentadienoate and benzoate from biphenyl: step 1/4.</text>
</comment>
<comment type="subunit">
    <text evidence="2 5">Heterohexamer consisting of three BphA1 subunits and three BphA2 subunits. The multicomponent biphenyl dioxygenase system is composed of a ferredoxin reductase (BphA4), a ferredoxin (BphA3), and a terminal oxygenase (BphA1A2).</text>
</comment>
<comment type="interaction">
    <interactant intactId="EBI-1040088">
        <id>Q53123</id>
    </interactant>
    <interactant intactId="EBI-1040100">
        <id>Q53122</id>
        <label>bphA1</label>
    </interactant>
    <organismsDiffer>false</organismsDiffer>
    <experiments>2</experiments>
</comment>
<comment type="induction">
    <text evidence="1">Transcription is up-regulated by aromatic compounds including biphenyl, ethylbenzene, benzene, toluene, xylene, cumene, cymene, and chlorinated benzenes. Is under the control of the BphST two-component regulatory system.</text>
</comment>
<comment type="similarity">
    <text evidence="7">Belongs to the bacterial ring-hydroxylating dioxygenase beta subunit family.</text>
</comment>
<evidence type="ECO:0000269" key="1">
    <source>
    </source>
</evidence>
<evidence type="ECO:0000269" key="2">
    <source>
    </source>
</evidence>
<evidence type="ECO:0000269" key="3">
    <source>
    </source>
</evidence>
<evidence type="ECO:0000303" key="4">
    <source>
    </source>
</evidence>
<evidence type="ECO:0000303" key="5">
    <source>
    </source>
</evidence>
<evidence type="ECO:0000303" key="6">
    <source>
    </source>
</evidence>
<evidence type="ECO:0000305" key="7"/>
<evidence type="ECO:0000312" key="8">
    <source>
        <dbReference type="EMBL" id="ABG99106.1"/>
    </source>
</evidence>
<evidence type="ECO:0007829" key="9">
    <source>
        <dbReference type="PDB" id="1ULI"/>
    </source>
</evidence>
<evidence type="ECO:0007829" key="10">
    <source>
        <dbReference type="PDB" id="1ULJ"/>
    </source>
</evidence>
<protein>
    <recommendedName>
        <fullName evidence="7">Biphenyl 2,3-dioxygenase subunit beta</fullName>
        <ecNumber evidence="3">1.14.12.18</ecNumber>
    </recommendedName>
    <alternativeName>
        <fullName evidence="7">Biphenyl dioxygenase system, oxygenase component subunit beta</fullName>
        <shortName evidence="7">BDO, oxygenase component subunit beta</shortName>
    </alternativeName>
    <alternativeName>
        <fullName evidence="4">Terminal oxygenase component of biphenyl dioxygenase, small subunit</fullName>
    </alternativeName>
</protein>
<accession>Q53123</accession>
<sequence>MIDAESPTTAFRTKPAPVDPSLQHEIEQFYYWEAKLLNDRRFQEWFDLLAEDIHYFMPIRTTRIMRETAQEYSGAREYAHFDDNAQMMRGRLRKITSDVSWSENPASRTRHVISNVMIVDGEKPGEYHVSSVFIVYRNRLERQLDIFAGERKDILRRTGSEAGFELAKRTILIDQSTILSNNLSFFF</sequence>
<organism>
    <name type="scientific">Rhodococcus jostii (strain RHA1)</name>
    <dbReference type="NCBI Taxonomy" id="101510"/>
    <lineage>
        <taxon>Bacteria</taxon>
        <taxon>Bacillati</taxon>
        <taxon>Actinomycetota</taxon>
        <taxon>Actinomycetes</taxon>
        <taxon>Mycobacteriales</taxon>
        <taxon>Nocardiaceae</taxon>
        <taxon>Rhodococcus</taxon>
    </lineage>
</organism>
<name>BPHA2_RHOJR</name>
<dbReference type="EC" id="1.14.12.18" evidence="3"/>
<dbReference type="EMBL" id="D32142">
    <property type="protein sequence ID" value="BAA06869.1"/>
    <property type="molecule type" value="Genomic_DNA"/>
</dbReference>
<dbReference type="EMBL" id="CP000432">
    <property type="protein sequence ID" value="ABG99106.1"/>
    <property type="molecule type" value="Genomic_DNA"/>
</dbReference>
<dbReference type="RefSeq" id="WP_011599001.1">
    <property type="nucleotide sequence ID" value="NC_008269.1"/>
</dbReference>
<dbReference type="PDB" id="1ULI">
    <property type="method" value="X-ray"/>
    <property type="resolution" value="2.20 A"/>
    <property type="chains" value="B/D/F=1-187"/>
</dbReference>
<dbReference type="PDB" id="1ULJ">
    <property type="method" value="X-ray"/>
    <property type="resolution" value="2.60 A"/>
    <property type="chains" value="B/D/F=1-187"/>
</dbReference>
<dbReference type="PDBsum" id="1ULI"/>
<dbReference type="PDBsum" id="1ULJ"/>
<dbReference type="SMR" id="Q53123"/>
<dbReference type="IntAct" id="Q53123">
    <property type="interactions" value="1"/>
</dbReference>
<dbReference type="KEGG" id="rha:RHA1_ro08059"/>
<dbReference type="PATRIC" id="fig|101510.16.peg.7406"/>
<dbReference type="HOGENOM" id="CLU_102527_1_1_11"/>
<dbReference type="OrthoDB" id="3212009at2"/>
<dbReference type="UniPathway" id="UPA00155">
    <property type="reaction ID" value="UER00250"/>
</dbReference>
<dbReference type="EvolutionaryTrace" id="Q53123"/>
<dbReference type="Proteomes" id="UP000008710">
    <property type="component" value="Plasmid pRHL1"/>
</dbReference>
<dbReference type="GO" id="GO:0018687">
    <property type="term" value="F:biphenyl 2,3-dioxygenase activity"/>
    <property type="evidence" value="ECO:0007669"/>
    <property type="project" value="UniProtKB-EC"/>
</dbReference>
<dbReference type="GO" id="GO:0019380">
    <property type="term" value="P:3-phenylpropionate catabolic process"/>
    <property type="evidence" value="ECO:0007669"/>
    <property type="project" value="TreeGrafter"/>
</dbReference>
<dbReference type="CDD" id="cd00667">
    <property type="entry name" value="ring_hydroxylating_dioxygenases_beta"/>
    <property type="match status" value="1"/>
</dbReference>
<dbReference type="Gene3D" id="3.10.450.50">
    <property type="match status" value="1"/>
</dbReference>
<dbReference type="InterPro" id="IPR032710">
    <property type="entry name" value="NTF2-like_dom_sf"/>
</dbReference>
<dbReference type="InterPro" id="IPR000391">
    <property type="entry name" value="Rng_hydr_dOase-bsu"/>
</dbReference>
<dbReference type="NCBIfam" id="NF007479">
    <property type="entry name" value="PRK10069.1"/>
    <property type="match status" value="1"/>
</dbReference>
<dbReference type="PANTHER" id="PTHR41534:SF2">
    <property type="entry name" value="3-PHENYLPROPIONATE_CINNAMIC ACID DIOXYGENASE SUBUNIT BETA"/>
    <property type="match status" value="1"/>
</dbReference>
<dbReference type="PANTHER" id="PTHR41534">
    <property type="entry name" value="BLR3401 PROTEIN"/>
    <property type="match status" value="1"/>
</dbReference>
<dbReference type="Pfam" id="PF00866">
    <property type="entry name" value="Ring_hydroxyl_B"/>
    <property type="match status" value="1"/>
</dbReference>
<dbReference type="SUPFAM" id="SSF54427">
    <property type="entry name" value="NTF2-like"/>
    <property type="match status" value="1"/>
</dbReference>
<geneLocation type="plasmid" evidence="8">
    <name>pRHL1</name>
</geneLocation>
<keyword id="KW-0002">3D-structure</keyword>
<keyword id="KW-0058">Aromatic hydrocarbons catabolism</keyword>
<keyword id="KW-0223">Dioxygenase</keyword>
<keyword id="KW-0520">NAD</keyword>
<keyword id="KW-0560">Oxidoreductase</keyword>
<keyword id="KW-0614">Plasmid</keyword>
<reference key="1">
    <citation type="journal article" date="1995" name="Appl. Environ. Microbiol.">
        <title>Characterization of biphenyl catabolic genes of gram-positive polychlorinated biphenyl degrader Rhodococcus sp. strain RHA1.</title>
        <authorList>
            <person name="Masai E."/>
            <person name="Yamada A."/>
            <person name="Healy J.M."/>
            <person name="Hatta T."/>
            <person name="Kimbara K."/>
            <person name="Fukuda M."/>
            <person name="Yano K."/>
        </authorList>
    </citation>
    <scope>NUCLEOTIDE SEQUENCE [GENOMIC DNA]</scope>
    <scope>PATHWAY</scope>
    <source>
        <strain>RHA1</strain>
    </source>
</reference>
<reference key="2">
    <citation type="journal article" date="2006" name="Proc. Natl. Acad. Sci. U.S.A.">
        <title>The complete genome of Rhodococcus sp. RHA1 provides insights into a catabolic powerhouse.</title>
        <authorList>
            <person name="McLeod M.P."/>
            <person name="Warren R.L."/>
            <person name="Hsiao W.W.L."/>
            <person name="Araki N."/>
            <person name="Myhre M."/>
            <person name="Fernandes C."/>
            <person name="Miyazawa D."/>
            <person name="Wong W."/>
            <person name="Lillquist A.L."/>
            <person name="Wang D."/>
            <person name="Dosanjh M."/>
            <person name="Hara H."/>
            <person name="Petrescu A."/>
            <person name="Morin R.D."/>
            <person name="Yang G."/>
            <person name="Stott J.M."/>
            <person name="Schein J.E."/>
            <person name="Shin H."/>
            <person name="Smailus D."/>
            <person name="Siddiqui A.S."/>
            <person name="Marra M.A."/>
            <person name="Jones S.J.M."/>
            <person name="Holt R."/>
            <person name="Brinkman F.S.L."/>
            <person name="Miyauchi K."/>
            <person name="Fukuda M."/>
            <person name="Davies J.E."/>
            <person name="Mohn W.W."/>
            <person name="Eltis L.D."/>
        </authorList>
    </citation>
    <scope>NUCLEOTIDE SEQUENCE [LARGE SCALE GENOMIC DNA]</scope>
    <source>
        <strain>RHA1</strain>
    </source>
</reference>
<reference key="3">
    <citation type="journal article" date="2004" name="J. Bacteriol.">
        <title>Characterization of transcriptional regulatory genes for biphenyl degradation in Rhodococcus sp. strain RHA1.</title>
        <authorList>
            <person name="Takeda H."/>
            <person name="Yamada A."/>
            <person name="Miyauchi K."/>
            <person name="Masai E."/>
            <person name="Fukuda M."/>
        </authorList>
    </citation>
    <scope>INDUCTION</scope>
    <source>
        <strain>RHA1</strain>
    </source>
</reference>
<reference key="4">
    <citation type="journal article" date="2007" name="Biosci. Biotechnol. Biochem.">
        <title>Characterization of two biphenyl dioxygenases for biphenyl/PCB degradation in A PCB degrader, Rhodococcus sp. strain RHA1.</title>
        <authorList>
            <person name="Iwasaki T."/>
            <person name="Takeda H."/>
            <person name="Miyauchi K."/>
            <person name="Yamada T."/>
            <person name="Masai E."/>
            <person name="Fukuda M."/>
        </authorList>
    </citation>
    <scope>FUNCTION</scope>
    <scope>CATALYTIC ACTIVITY</scope>
    <scope>SUBSTRATE SPECIFICITY</scope>
    <source>
        <strain>RHA1</strain>
    </source>
</reference>
<reference key="5">
    <citation type="journal article" date="2004" name="J. Mol. Biol.">
        <title>Crystal structure of the terminal oxygenase component of biphenyl dioxygenase derived from Rhodococcus sp. strain RHA1.</title>
        <authorList>
            <person name="Furusawa Y."/>
            <person name="Nagarajan V."/>
            <person name="Tanokura M."/>
            <person name="Masai E."/>
            <person name="Fukuda M."/>
            <person name="Senda T."/>
        </authorList>
    </citation>
    <scope>X-RAY CRYSTALLOGRAPHY (2.20 ANGSTROMS) IN COMPLEX WITH ALPHA SUBUNIT</scope>
    <source>
        <strain>RHA1</strain>
    </source>
</reference>